<keyword id="KW-0238">DNA-binding</keyword>
<keyword id="KW-0539">Nucleus</keyword>
<keyword id="KW-1185">Reference proteome</keyword>
<keyword id="KW-0804">Transcription</keyword>
<keyword id="KW-0805">Transcription regulation</keyword>
<protein>
    <recommendedName>
        <fullName>MADS-box transcription factor 27</fullName>
    </recommendedName>
    <alternativeName>
        <fullName>OsMADS27</fullName>
    </alternativeName>
    <alternativeName>
        <fullName>RMADS218</fullName>
    </alternativeName>
</protein>
<feature type="chain" id="PRO_0000229908" description="MADS-box transcription factor 27">
    <location>
        <begin position="1"/>
        <end position="240"/>
    </location>
</feature>
<feature type="domain" description="MADS-box" evidence="1">
    <location>
        <begin position="1"/>
        <end position="61"/>
    </location>
</feature>
<feature type="domain" description="K-box" evidence="2">
    <location>
        <begin position="86"/>
        <end position="176"/>
    </location>
</feature>
<feature type="region of interest" description="Disordered" evidence="3">
    <location>
        <begin position="220"/>
        <end position="240"/>
    </location>
</feature>
<feature type="compositionally biased region" description="Polar residues" evidence="3">
    <location>
        <begin position="220"/>
        <end position="231"/>
    </location>
</feature>
<feature type="sequence conflict" description="In Ref. 5; AAS59829." evidence="5" ref="5">
    <original>F</original>
    <variation>I</variation>
    <location>
        <position position="88"/>
    </location>
</feature>
<name>MAD27_ORYSJ</name>
<comment type="function">
    <text>Probable transcription factor.</text>
</comment>
<comment type="subcellular location">
    <subcellularLocation>
        <location evidence="5">Nucleus</location>
    </subcellularLocation>
</comment>
<comment type="tissue specificity">
    <text evidence="4">Ubiquitous.</text>
</comment>
<comment type="sequence caution" evidence="5">
    <conflict type="erroneous gene model prediction">
        <sequence resource="EMBL-CDS" id="BAD29571"/>
    </conflict>
</comment>
<gene>
    <name type="primary">MADS27</name>
    <name type="ordered locus">Os02g0579600</name>
    <name type="ordered locus">LOC_Os02g36924</name>
    <name type="ORF">B1267B06.20</name>
</gene>
<dbReference type="EMBL" id="AY177696">
    <property type="protein sequence ID" value="AAO47706.1"/>
    <property type="molecule type" value="mRNA"/>
</dbReference>
<dbReference type="EMBL" id="AP006161">
    <property type="protein sequence ID" value="BAD29571.1"/>
    <property type="status" value="ALT_SEQ"/>
    <property type="molecule type" value="Genomic_DNA"/>
</dbReference>
<dbReference type="EMBL" id="AP008208">
    <property type="protein sequence ID" value="BAF09144.1"/>
    <property type="molecule type" value="Genomic_DNA"/>
</dbReference>
<dbReference type="EMBL" id="AP014958">
    <property type="protein sequence ID" value="BAS79407.1"/>
    <property type="molecule type" value="Genomic_DNA"/>
</dbReference>
<dbReference type="EMBL" id="AY551923">
    <property type="protein sequence ID" value="AAS59829.1"/>
    <property type="molecule type" value="mRNA"/>
</dbReference>
<dbReference type="RefSeq" id="XP_015626695.1">
    <property type="nucleotide sequence ID" value="XM_015771209.1"/>
</dbReference>
<dbReference type="SMR" id="Q6EP49"/>
<dbReference type="FunCoup" id="Q6EP49">
    <property type="interactions" value="47"/>
</dbReference>
<dbReference type="STRING" id="39947.Q6EP49"/>
<dbReference type="PaxDb" id="39947-Q6EP49"/>
<dbReference type="EnsemblPlants" id="Os02t0579600-01">
    <property type="protein sequence ID" value="Os02t0579600-01"/>
    <property type="gene ID" value="Os02g0579600"/>
</dbReference>
<dbReference type="Gramene" id="Os02t0579600-01">
    <property type="protein sequence ID" value="Os02t0579600-01"/>
    <property type="gene ID" value="Os02g0579600"/>
</dbReference>
<dbReference type="KEGG" id="dosa:Os02g0579600"/>
<dbReference type="eggNOG" id="KOG0014">
    <property type="taxonomic scope" value="Eukaryota"/>
</dbReference>
<dbReference type="HOGENOM" id="CLU_053053_2_0_1"/>
<dbReference type="InParanoid" id="Q6EP49"/>
<dbReference type="OMA" id="KSELKFW"/>
<dbReference type="OrthoDB" id="1898716at2759"/>
<dbReference type="Proteomes" id="UP000000763">
    <property type="component" value="Chromosome 2"/>
</dbReference>
<dbReference type="Proteomes" id="UP000059680">
    <property type="component" value="Chromosome 2"/>
</dbReference>
<dbReference type="GO" id="GO:0005634">
    <property type="term" value="C:nucleus"/>
    <property type="evidence" value="ECO:0007669"/>
    <property type="project" value="UniProtKB-SubCell"/>
</dbReference>
<dbReference type="GO" id="GO:0000981">
    <property type="term" value="F:DNA-binding transcription factor activity, RNA polymerase II-specific"/>
    <property type="evidence" value="ECO:0000318"/>
    <property type="project" value="GO_Central"/>
</dbReference>
<dbReference type="GO" id="GO:0046983">
    <property type="term" value="F:protein dimerization activity"/>
    <property type="evidence" value="ECO:0007669"/>
    <property type="project" value="InterPro"/>
</dbReference>
<dbReference type="GO" id="GO:0000978">
    <property type="term" value="F:RNA polymerase II cis-regulatory region sequence-specific DNA binding"/>
    <property type="evidence" value="ECO:0000318"/>
    <property type="project" value="GO_Central"/>
</dbReference>
<dbReference type="GO" id="GO:0045944">
    <property type="term" value="P:positive regulation of transcription by RNA polymerase II"/>
    <property type="evidence" value="ECO:0007669"/>
    <property type="project" value="InterPro"/>
</dbReference>
<dbReference type="GO" id="GO:0006357">
    <property type="term" value="P:regulation of transcription by RNA polymerase II"/>
    <property type="evidence" value="ECO:0000318"/>
    <property type="project" value="GO_Central"/>
</dbReference>
<dbReference type="CDD" id="cd00265">
    <property type="entry name" value="MADS_MEF2_like"/>
    <property type="match status" value="1"/>
</dbReference>
<dbReference type="FunFam" id="3.40.1810.10:FF:000003">
    <property type="entry name" value="MADS-box transcription factor MADS-MC"/>
    <property type="match status" value="1"/>
</dbReference>
<dbReference type="Gene3D" id="3.40.1810.10">
    <property type="entry name" value="Transcription factor, MADS-box"/>
    <property type="match status" value="1"/>
</dbReference>
<dbReference type="InterPro" id="IPR050142">
    <property type="entry name" value="MADS-box/MEF2_TF"/>
</dbReference>
<dbReference type="InterPro" id="IPR033896">
    <property type="entry name" value="MEF2-like_N"/>
</dbReference>
<dbReference type="InterPro" id="IPR002487">
    <property type="entry name" value="TF_Kbox"/>
</dbReference>
<dbReference type="InterPro" id="IPR002100">
    <property type="entry name" value="TF_MADSbox"/>
</dbReference>
<dbReference type="InterPro" id="IPR036879">
    <property type="entry name" value="TF_MADSbox_sf"/>
</dbReference>
<dbReference type="PANTHER" id="PTHR48019">
    <property type="entry name" value="SERUM RESPONSE FACTOR HOMOLOG"/>
    <property type="match status" value="1"/>
</dbReference>
<dbReference type="Pfam" id="PF01486">
    <property type="entry name" value="K-box"/>
    <property type="match status" value="1"/>
</dbReference>
<dbReference type="Pfam" id="PF00319">
    <property type="entry name" value="SRF-TF"/>
    <property type="match status" value="1"/>
</dbReference>
<dbReference type="PRINTS" id="PR00404">
    <property type="entry name" value="MADSDOMAIN"/>
</dbReference>
<dbReference type="SMART" id="SM00432">
    <property type="entry name" value="MADS"/>
    <property type="match status" value="1"/>
</dbReference>
<dbReference type="SUPFAM" id="SSF55455">
    <property type="entry name" value="SRF-like"/>
    <property type="match status" value="1"/>
</dbReference>
<dbReference type="PROSITE" id="PS51297">
    <property type="entry name" value="K_BOX"/>
    <property type="match status" value="1"/>
</dbReference>
<dbReference type="PROSITE" id="PS00350">
    <property type="entry name" value="MADS_BOX_1"/>
    <property type="match status" value="1"/>
</dbReference>
<dbReference type="PROSITE" id="PS50066">
    <property type="entry name" value="MADS_BOX_2"/>
    <property type="match status" value="1"/>
</dbReference>
<reference key="1">
    <citation type="journal article" date="2003" name="Plant Cell Physiol.">
        <title>Systematic reverse genetic screening of T-DNA tagged genes in rice for functional genomic analyses: MADS-box genes as a test case.</title>
        <authorList>
            <person name="Lee S."/>
            <person name="Kim J."/>
            <person name="Son J.-S."/>
            <person name="Nam J."/>
            <person name="Jeong D.-H."/>
            <person name="Lee K."/>
            <person name="Jang S."/>
            <person name="Yoo J."/>
            <person name="Lee J."/>
            <person name="Lee D.-Y."/>
            <person name="Kang H.-G."/>
            <person name="An G."/>
        </authorList>
    </citation>
    <scope>NUCLEOTIDE SEQUENCE [MRNA]</scope>
    <scope>TISSUE SPECIFICITY</scope>
    <source>
        <strain>cv. Dongjin</strain>
    </source>
</reference>
<reference key="2">
    <citation type="journal article" date="2005" name="Nature">
        <title>The map-based sequence of the rice genome.</title>
        <authorList>
            <consortium name="International rice genome sequencing project (IRGSP)"/>
        </authorList>
    </citation>
    <scope>NUCLEOTIDE SEQUENCE [LARGE SCALE GENOMIC DNA]</scope>
    <source>
        <strain>cv. Nipponbare</strain>
    </source>
</reference>
<reference key="3">
    <citation type="journal article" date="2008" name="Nucleic Acids Res.">
        <title>The rice annotation project database (RAP-DB): 2008 update.</title>
        <authorList>
            <consortium name="The rice annotation project (RAP)"/>
        </authorList>
    </citation>
    <scope>GENOME REANNOTATION</scope>
    <source>
        <strain>cv. Nipponbare</strain>
    </source>
</reference>
<reference key="4">
    <citation type="journal article" date="2013" name="Rice">
        <title>Improvement of the Oryza sativa Nipponbare reference genome using next generation sequence and optical map data.</title>
        <authorList>
            <person name="Kawahara Y."/>
            <person name="de la Bastide M."/>
            <person name="Hamilton J.P."/>
            <person name="Kanamori H."/>
            <person name="McCombie W.R."/>
            <person name="Ouyang S."/>
            <person name="Schwartz D.C."/>
            <person name="Tanaka T."/>
            <person name="Wu J."/>
            <person name="Zhou S."/>
            <person name="Childs K.L."/>
            <person name="Davidson R.M."/>
            <person name="Lin H."/>
            <person name="Quesada-Ocampo L."/>
            <person name="Vaillancourt B."/>
            <person name="Sakai H."/>
            <person name="Lee S.S."/>
            <person name="Kim J."/>
            <person name="Numa H."/>
            <person name="Itoh T."/>
            <person name="Buell C.R."/>
            <person name="Matsumoto T."/>
        </authorList>
    </citation>
    <scope>GENOME REANNOTATION</scope>
    <source>
        <strain>cv. Nipponbare</strain>
    </source>
</reference>
<reference key="5">
    <citation type="submission" date="2004-02" db="EMBL/GenBank/DDBJ databases">
        <authorList>
            <person name="Yao Q."/>
            <person name="Peng R."/>
            <person name="Xiong A."/>
        </authorList>
    </citation>
    <scope>NUCLEOTIDE SEQUENCE [MRNA] OF 1-88</scope>
</reference>
<accession>Q6EP49</accession>
<accession>Q0E044</accession>
<accession>Q6Q9H9</accession>
<accession>Q84NC4</accession>
<proteinExistence type="evidence at transcript level"/>
<sequence>MGRGKIVIRRIDNSTSRQVTFSKRRNGIFKKAKELAILCDAEVGLMIFSSTGRLYEYSSTSMKSVIDRYGKSKDEQQAVANPNSELKFWQREAASLRQQLHNLQENHRQLMGEDLSGLNVKELQSLENQLEISLRSVRTKKDHVLIDEIHELNRKGSLVHQENMELYKKISLIRQENAELYKKIYETEGPSEVNRDSPTPYNFAVIEKTNVPVQLGLSTLPQHSDAEQSTAPKLGLQLNP</sequence>
<organism>
    <name type="scientific">Oryza sativa subsp. japonica</name>
    <name type="common">Rice</name>
    <dbReference type="NCBI Taxonomy" id="39947"/>
    <lineage>
        <taxon>Eukaryota</taxon>
        <taxon>Viridiplantae</taxon>
        <taxon>Streptophyta</taxon>
        <taxon>Embryophyta</taxon>
        <taxon>Tracheophyta</taxon>
        <taxon>Spermatophyta</taxon>
        <taxon>Magnoliopsida</taxon>
        <taxon>Liliopsida</taxon>
        <taxon>Poales</taxon>
        <taxon>Poaceae</taxon>
        <taxon>BOP clade</taxon>
        <taxon>Oryzoideae</taxon>
        <taxon>Oryzeae</taxon>
        <taxon>Oryzinae</taxon>
        <taxon>Oryza</taxon>
        <taxon>Oryza sativa</taxon>
    </lineage>
</organism>
<evidence type="ECO:0000255" key="1">
    <source>
        <dbReference type="PROSITE-ProRule" id="PRU00251"/>
    </source>
</evidence>
<evidence type="ECO:0000255" key="2">
    <source>
        <dbReference type="PROSITE-ProRule" id="PRU00629"/>
    </source>
</evidence>
<evidence type="ECO:0000256" key="3">
    <source>
        <dbReference type="SAM" id="MobiDB-lite"/>
    </source>
</evidence>
<evidence type="ECO:0000269" key="4">
    <source>
    </source>
</evidence>
<evidence type="ECO:0000305" key="5"/>